<gene>
    <name type="primary">P5</name>
    <name type="synonym">P11</name>
</gene>
<keyword id="KW-0204">Cytolysis</keyword>
<keyword id="KW-1235">Degradation of host cell envelope components during virus entry</keyword>
<keyword id="KW-1236">Degradation of host peptidoglycans during virus entry</keyword>
<keyword id="KW-0578">Host cell lysis by virus</keyword>
<keyword id="KW-0378">Hydrolase</keyword>
<keyword id="KW-1185">Reference proteome</keyword>
<keyword id="KW-1188">Viral release from host cell</keyword>
<keyword id="KW-0946">Virion</keyword>
<keyword id="KW-1160">Virus entry into host cell</keyword>
<sequence>MSKDSAFAVQYSLRALGQKVRADGVVGSETRAALDALPENQKKAIVELQALLPKAQSVGNNRVRFTTAEVDSAVARISQKIGVPASYYQFLIPIENFVVAGGFETTVSGSFRGLGQFNRQTWDRLRRLGRNLPAFEEGSAQLNASLYAIGFLYLENKRAYEASFKGRVFTHEIAYLYHNQGAPAAEQYLTSGRLVYPKQSEAAVAAVAAARNQHVKESWA</sequence>
<organismHost>
    <name type="scientific">Pseudomonas savastanoi pv. phaseolicola</name>
    <name type="common">Pseudomonas syringae pv. phaseolicola</name>
    <dbReference type="NCBI Taxonomy" id="319"/>
</organismHost>
<reference key="1">
    <citation type="journal article" date="1986" name="J. Virol.">
        <title>Nucleotide sequence of the small double-stranded RNA segment of bacteriophage phi 6: novel mechanism of natural translational control.</title>
        <authorList>
            <person name="McGraw T."/>
            <person name="Mindich L."/>
            <person name="Frangione B."/>
        </authorList>
    </citation>
    <scope>NUCLEOTIDE SEQUENCE [GENOMIC RNA]</scope>
</reference>
<reference key="2">
    <citation type="journal article" date="1992" name="Biochim. Biophys. Acta">
        <title>The lytic enzyme of the Pseudomonas phage phi 6. Purification and biochemical characterization.</title>
        <authorList>
            <person name="Caldentey J."/>
            <person name="Bamford D.H."/>
        </authorList>
    </citation>
    <scope>FUNCTION</scope>
    <scope>SUBUNIT</scope>
    <scope>BIOPHYSICOCHEMICAL PROPERTIES</scope>
</reference>
<reference key="3">
    <citation type="journal article" date="2013" name="Crit. Rev. Microbiol.">
        <title>Bacteriophage virion-associated peptidoglycan hydrolases: potential new enzybiotics.</title>
        <authorList>
            <person name="Rodriguez-Rubio L."/>
            <person name="Martinez B."/>
            <person name="Donovan D.M."/>
            <person name="Rodriguez A."/>
            <person name="Garcia P."/>
        </authorList>
    </citation>
    <scope>REVIEW</scope>
</reference>
<evidence type="ECO:0000269" key="1">
    <source>
    </source>
</evidence>
<evidence type="ECO:0000305" key="2"/>
<accession>P07582</accession>
<accession>Q38459</accession>
<protein>
    <recommendedName>
        <fullName evidence="2">Peptidoglycan hydrolase gp5</fullName>
    </recommendedName>
    <alternativeName>
        <fullName evidence="2">Gene product 5</fullName>
        <shortName>Gp5</shortName>
    </alternativeName>
</protein>
<feature type="chain" id="PRO_0000164636" description="Peptidoglycan hydrolase gp5">
    <location>
        <begin position="1"/>
        <end position="220"/>
    </location>
</feature>
<dbReference type="EMBL" id="M12921">
    <property type="protein sequence ID" value="AAA32361.1"/>
    <property type="molecule type" value="Genomic_RNA"/>
</dbReference>
<dbReference type="EMBL" id="M12921">
    <property type="protein sequence ID" value="AAA32362.1"/>
    <property type="status" value="ALT_INIT"/>
    <property type="molecule type" value="Genomic_RNA"/>
</dbReference>
<dbReference type="PIR" id="D23368">
    <property type="entry name" value="YVBPF6"/>
</dbReference>
<dbReference type="RefSeq" id="NP_620343.1">
    <property type="nucleotide sequence ID" value="NC_003714.1"/>
</dbReference>
<dbReference type="RefSeq" id="NP_620344.1">
    <property type="nucleotide sequence ID" value="NC_003714.1"/>
</dbReference>
<dbReference type="SMR" id="P07582"/>
<dbReference type="MEROPS" id="U40.001"/>
<dbReference type="KEGG" id="vg:956433"/>
<dbReference type="KEGG" id="vg:956434"/>
<dbReference type="Proteomes" id="UP000002610">
    <property type="component" value="Genome"/>
</dbReference>
<dbReference type="GO" id="GO:0044423">
    <property type="term" value="C:virion component"/>
    <property type="evidence" value="ECO:0007669"/>
    <property type="project" value="UniProtKB-KW"/>
</dbReference>
<dbReference type="GO" id="GO:0016787">
    <property type="term" value="F:hydrolase activity"/>
    <property type="evidence" value="ECO:0007669"/>
    <property type="project" value="UniProtKB-KW"/>
</dbReference>
<dbReference type="GO" id="GO:0031640">
    <property type="term" value="P:killing of cells of another organism"/>
    <property type="evidence" value="ECO:0007669"/>
    <property type="project" value="UniProtKB-KW"/>
</dbReference>
<dbReference type="GO" id="GO:0044409">
    <property type="term" value="P:symbiont entry into host"/>
    <property type="evidence" value="ECO:0000314"/>
    <property type="project" value="UniProtKB"/>
</dbReference>
<dbReference type="GO" id="GO:0098994">
    <property type="term" value="P:symbiont entry into host cell via disruption of host cell envelope"/>
    <property type="evidence" value="ECO:0007669"/>
    <property type="project" value="UniProtKB-KW"/>
</dbReference>
<dbReference type="GO" id="GO:0098932">
    <property type="term" value="P:symbiont entry into host cell via disruption of host cell wall peptidoglycan"/>
    <property type="evidence" value="ECO:0007669"/>
    <property type="project" value="UniProtKB-KW"/>
</dbReference>
<dbReference type="Gene3D" id="1.10.530.50">
    <property type="entry name" value="Peptidase U40"/>
    <property type="match status" value="1"/>
</dbReference>
<dbReference type="InterPro" id="IPR038288">
    <property type="entry name" value="Gp5_sf"/>
</dbReference>
<dbReference type="InterPro" id="IPR019505">
    <property type="entry name" value="Peptidase_U40"/>
</dbReference>
<dbReference type="Pfam" id="PF10464">
    <property type="entry name" value="Peptidase_U40"/>
    <property type="match status" value="1"/>
</dbReference>
<proteinExistence type="evidence at protein level"/>
<organism>
    <name type="scientific">Pseudomonas phage phi6</name>
    <name type="common">Bacteriophage phi-6</name>
    <dbReference type="NCBI Taxonomy" id="2928686"/>
    <lineage>
        <taxon>Viruses</taxon>
        <taxon>Riboviria</taxon>
        <taxon>Orthornavirae</taxon>
        <taxon>Duplornaviricota</taxon>
        <taxon>Vidaverviricetes</taxon>
        <taxon>Mindivirales</taxon>
        <taxon>Cystoviridae</taxon>
        <taxon>Cystovirus</taxon>
        <taxon>Cystovirus phi6</taxon>
    </lineage>
</organism>
<comment type="function">
    <text evidence="1">Muralytic enzyme exposed to host peptidoglycan layer after membrane fusion during viral entry. Functions as an exolysin that cleaves the peptide bridge formed by meso-diaminopimelic acid and D-alanine. Also lyses the host cell late in infection to release the virions.</text>
</comment>
<comment type="biophysicochemical properties">
    <phDependence>
        <text evidence="1">Optimum pH is 8.5.</text>
    </phDependence>
    <temperatureDependence>
        <text evidence="1">Inactivated at temperatures above 20 degrees Celsius.</text>
    </temperatureDependence>
</comment>
<comment type="subunit">
    <text evidence="1">Monomer.</text>
</comment>
<comment type="subcellular location">
    <subcellularLocation>
        <location>Virion</location>
    </subcellularLocation>
    <text>Located between the capsid and the envelope.</text>
</comment>
<comment type="similarity">
    <text evidence="2">Belongs to the peptidase U40 family.</text>
</comment>
<comment type="caution">
    <text evidence="2">It is uncertain whether Met-1 or Val-9 is the initiator.</text>
</comment>
<comment type="sequence caution" evidence="2">
    <conflict type="erroneous initiation">
        <sequence resource="EMBL-CDS" id="AAA32362"/>
    </conflict>
</comment>
<name>EXLYS_BPPH6</name>